<sequence length="692" mass="77122">MSAPAQPAPGVDGGDPSQARIRVPAGTTAATAVGEAGLPRRGTPDAIVVVRDADGNLRDLSWVPDVDTDITPVAANTDDGRSVIRHSTAHVLAQAVQELFPQAKLGIGPPITDGFYYDFDVPEPFTPEDLAALEKRMRQIVKEGQLFDRRVYESTEQARAELANEPYKLELVDDKSGDAEIMEVGGDELTAYDNLNPRTRERVWGDLCRGPHIPTTKHIPAFKLTRSSAAYWRGDQKNASLQRIYGTAWESQEALDRHLEFIEEAQRRDHRKLGVELDLFSFPDEIGSGLAVFHPKGGIVRRELEDYSRRKHTEAGYQFVNSPHITKAQLFHTSGHLDWYADGMFPPMHIDAEYNADGSLRKPGQDYYLKPMNCPMHCLIFRARGRSYRELPLRLFEFGTVYRYEKSGVVHGLTRVRGLTMDDAHIFCTRDQMRDELRSLLRFVLDLLADYGLTDFYLELSTKDPEKFVGAEEVWEEATTVLAEVGAESGLELVPDPGGAAFYGPKISVQVKDALGRTWQMSTIQLDFNFPERFGLEYTAADGTRHRPVMIHRALFGSIERFFGILTEHYAGAFPAWLAPVQVVGIPVADEHVAYLEEVATQLKSHGVRAEVDASDDRMAKKIVHHTNHKVPFMVLAGDRDVAAGAVSFRFGDRTQINGVARDDAVAAIVAWIADRENAVPTAELVKVAGRE</sequence>
<comment type="function">
    <text evidence="1">Catalyzes the attachment of threonine to tRNA(Thr) in a two-step reaction: L-threonine is first activated by ATP to form Thr-AMP and then transferred to the acceptor end of tRNA(Thr). Also edits incorrectly charged L-seryl-tRNA(Thr).</text>
</comment>
<comment type="catalytic activity">
    <reaction evidence="1">
        <text>tRNA(Thr) + L-threonine + ATP = L-threonyl-tRNA(Thr) + AMP + diphosphate + H(+)</text>
        <dbReference type="Rhea" id="RHEA:24624"/>
        <dbReference type="Rhea" id="RHEA-COMP:9670"/>
        <dbReference type="Rhea" id="RHEA-COMP:9704"/>
        <dbReference type="ChEBI" id="CHEBI:15378"/>
        <dbReference type="ChEBI" id="CHEBI:30616"/>
        <dbReference type="ChEBI" id="CHEBI:33019"/>
        <dbReference type="ChEBI" id="CHEBI:57926"/>
        <dbReference type="ChEBI" id="CHEBI:78442"/>
        <dbReference type="ChEBI" id="CHEBI:78534"/>
        <dbReference type="ChEBI" id="CHEBI:456215"/>
        <dbReference type="EC" id="6.1.1.3"/>
    </reaction>
</comment>
<comment type="cofactor">
    <cofactor evidence="1">
        <name>Zn(2+)</name>
        <dbReference type="ChEBI" id="CHEBI:29105"/>
    </cofactor>
    <text evidence="1">Binds 1 zinc ion per subunit.</text>
</comment>
<comment type="subunit">
    <text evidence="1">Homodimer.</text>
</comment>
<comment type="subcellular location">
    <subcellularLocation>
        <location evidence="1">Cytoplasm</location>
    </subcellularLocation>
</comment>
<comment type="similarity">
    <text evidence="1">Belongs to the class-II aminoacyl-tRNA synthetase family.</text>
</comment>
<gene>
    <name evidence="1" type="primary">thrS</name>
    <name type="ordered locus">MT2689</name>
</gene>
<name>SYT_MYCTO</name>
<accession>P9WFT4</accession>
<accession>L0TAE2</accession>
<accession>O06200</accession>
<accession>P67582</accession>
<organism>
    <name type="scientific">Mycobacterium tuberculosis (strain CDC 1551 / Oshkosh)</name>
    <dbReference type="NCBI Taxonomy" id="83331"/>
    <lineage>
        <taxon>Bacteria</taxon>
        <taxon>Bacillati</taxon>
        <taxon>Actinomycetota</taxon>
        <taxon>Actinomycetes</taxon>
        <taxon>Mycobacteriales</taxon>
        <taxon>Mycobacteriaceae</taxon>
        <taxon>Mycobacterium</taxon>
        <taxon>Mycobacterium tuberculosis complex</taxon>
    </lineage>
</organism>
<keyword id="KW-0030">Aminoacyl-tRNA synthetase</keyword>
<keyword id="KW-0067">ATP-binding</keyword>
<keyword id="KW-0963">Cytoplasm</keyword>
<keyword id="KW-0436">Ligase</keyword>
<keyword id="KW-0479">Metal-binding</keyword>
<keyword id="KW-0547">Nucleotide-binding</keyword>
<keyword id="KW-0648">Protein biosynthesis</keyword>
<keyword id="KW-1185">Reference proteome</keyword>
<keyword id="KW-0694">RNA-binding</keyword>
<keyword id="KW-0820">tRNA-binding</keyword>
<keyword id="KW-0862">Zinc</keyword>
<proteinExistence type="inferred from homology"/>
<feature type="chain" id="PRO_0000428481" description="Threonine--tRNA ligase">
    <location>
        <begin position="1"/>
        <end position="692"/>
    </location>
</feature>
<feature type="domain" description="TGS" evidence="2">
    <location>
        <begin position="1"/>
        <end position="74"/>
    </location>
</feature>
<feature type="region of interest" description="Disordered" evidence="3">
    <location>
        <begin position="1"/>
        <end position="20"/>
    </location>
</feature>
<feature type="region of interest" description="Catalytic" evidence="1">
    <location>
        <begin position="269"/>
        <end position="575"/>
    </location>
</feature>
<feature type="binding site" evidence="1">
    <location>
        <position position="374"/>
    </location>
    <ligand>
        <name>Zn(2+)</name>
        <dbReference type="ChEBI" id="CHEBI:29105"/>
    </ligand>
</feature>
<feature type="binding site" evidence="1">
    <location>
        <position position="425"/>
    </location>
    <ligand>
        <name>Zn(2+)</name>
        <dbReference type="ChEBI" id="CHEBI:29105"/>
    </ligand>
</feature>
<feature type="binding site" evidence="1">
    <location>
        <position position="552"/>
    </location>
    <ligand>
        <name>Zn(2+)</name>
        <dbReference type="ChEBI" id="CHEBI:29105"/>
    </ligand>
</feature>
<protein>
    <recommendedName>
        <fullName evidence="1">Threonine--tRNA ligase</fullName>
        <ecNumber evidence="1">6.1.1.3</ecNumber>
    </recommendedName>
    <alternativeName>
        <fullName evidence="1">Threonyl-tRNA synthetase</fullName>
        <shortName evidence="1">ThrRS</shortName>
    </alternativeName>
</protein>
<reference key="1">
    <citation type="journal article" date="2002" name="J. Bacteriol.">
        <title>Whole-genome comparison of Mycobacterium tuberculosis clinical and laboratory strains.</title>
        <authorList>
            <person name="Fleischmann R.D."/>
            <person name="Alland D."/>
            <person name="Eisen J.A."/>
            <person name="Carpenter L."/>
            <person name="White O."/>
            <person name="Peterson J.D."/>
            <person name="DeBoy R.T."/>
            <person name="Dodson R.J."/>
            <person name="Gwinn M.L."/>
            <person name="Haft D.H."/>
            <person name="Hickey E.K."/>
            <person name="Kolonay J.F."/>
            <person name="Nelson W.C."/>
            <person name="Umayam L.A."/>
            <person name="Ermolaeva M.D."/>
            <person name="Salzberg S.L."/>
            <person name="Delcher A."/>
            <person name="Utterback T.R."/>
            <person name="Weidman J.F."/>
            <person name="Khouri H.M."/>
            <person name="Gill J."/>
            <person name="Mikula A."/>
            <person name="Bishai W."/>
            <person name="Jacobs W.R. Jr."/>
            <person name="Venter J.C."/>
            <person name="Fraser C.M."/>
        </authorList>
    </citation>
    <scope>NUCLEOTIDE SEQUENCE [LARGE SCALE GENOMIC DNA]</scope>
    <source>
        <strain>CDC 1551 / Oshkosh</strain>
    </source>
</reference>
<evidence type="ECO:0000255" key="1">
    <source>
        <dbReference type="HAMAP-Rule" id="MF_00184"/>
    </source>
</evidence>
<evidence type="ECO:0000255" key="2">
    <source>
        <dbReference type="PROSITE-ProRule" id="PRU01228"/>
    </source>
</evidence>
<evidence type="ECO:0000256" key="3">
    <source>
        <dbReference type="SAM" id="MobiDB-lite"/>
    </source>
</evidence>
<dbReference type="EC" id="6.1.1.3" evidence="1"/>
<dbReference type="EMBL" id="AE000516">
    <property type="protein sequence ID" value="AAK47005.1"/>
    <property type="molecule type" value="Genomic_DNA"/>
</dbReference>
<dbReference type="PIR" id="E70571">
    <property type="entry name" value="E70571"/>
</dbReference>
<dbReference type="RefSeq" id="WP_003413486.1">
    <property type="nucleotide sequence ID" value="NZ_KK341227.1"/>
</dbReference>
<dbReference type="SMR" id="P9WFT4"/>
<dbReference type="KEGG" id="mtc:MT2689"/>
<dbReference type="PATRIC" id="fig|83331.31.peg.2899"/>
<dbReference type="HOGENOM" id="CLU_008554_0_1_11"/>
<dbReference type="Proteomes" id="UP000001020">
    <property type="component" value="Chromosome"/>
</dbReference>
<dbReference type="GO" id="GO:0005737">
    <property type="term" value="C:cytoplasm"/>
    <property type="evidence" value="ECO:0007669"/>
    <property type="project" value="UniProtKB-SubCell"/>
</dbReference>
<dbReference type="GO" id="GO:0005524">
    <property type="term" value="F:ATP binding"/>
    <property type="evidence" value="ECO:0007669"/>
    <property type="project" value="UniProtKB-UniRule"/>
</dbReference>
<dbReference type="GO" id="GO:0046872">
    <property type="term" value="F:metal ion binding"/>
    <property type="evidence" value="ECO:0007669"/>
    <property type="project" value="UniProtKB-KW"/>
</dbReference>
<dbReference type="GO" id="GO:0004829">
    <property type="term" value="F:threonine-tRNA ligase activity"/>
    <property type="evidence" value="ECO:0007669"/>
    <property type="project" value="UniProtKB-UniRule"/>
</dbReference>
<dbReference type="GO" id="GO:0000049">
    <property type="term" value="F:tRNA binding"/>
    <property type="evidence" value="ECO:0007669"/>
    <property type="project" value="UniProtKB-KW"/>
</dbReference>
<dbReference type="GO" id="GO:0006435">
    <property type="term" value="P:threonyl-tRNA aminoacylation"/>
    <property type="evidence" value="ECO:0007669"/>
    <property type="project" value="UniProtKB-UniRule"/>
</dbReference>
<dbReference type="CDD" id="cd00860">
    <property type="entry name" value="ThrRS_anticodon"/>
    <property type="match status" value="1"/>
</dbReference>
<dbReference type="CDD" id="cd00771">
    <property type="entry name" value="ThrRS_core"/>
    <property type="match status" value="1"/>
</dbReference>
<dbReference type="FunFam" id="3.30.54.20:FF:000003">
    <property type="entry name" value="Threonine--tRNA ligase"/>
    <property type="match status" value="1"/>
</dbReference>
<dbReference type="FunFam" id="3.30.930.10:FF:000019">
    <property type="entry name" value="Threonine--tRNA ligase"/>
    <property type="match status" value="1"/>
</dbReference>
<dbReference type="FunFam" id="3.40.50.800:FF:000001">
    <property type="entry name" value="Threonine--tRNA ligase"/>
    <property type="match status" value="1"/>
</dbReference>
<dbReference type="FunFam" id="3.30.980.10:FF:000005">
    <property type="entry name" value="Threonyl-tRNA synthetase, mitochondrial"/>
    <property type="match status" value="1"/>
</dbReference>
<dbReference type="Gene3D" id="3.30.54.20">
    <property type="match status" value="1"/>
</dbReference>
<dbReference type="Gene3D" id="3.40.50.800">
    <property type="entry name" value="Anticodon-binding domain"/>
    <property type="match status" value="1"/>
</dbReference>
<dbReference type="Gene3D" id="3.30.930.10">
    <property type="entry name" value="Bira Bifunctional Protein, Domain 2"/>
    <property type="match status" value="1"/>
</dbReference>
<dbReference type="Gene3D" id="3.30.980.10">
    <property type="entry name" value="Threonyl-trna Synthetase, Chain A, domain 2"/>
    <property type="match status" value="1"/>
</dbReference>
<dbReference type="HAMAP" id="MF_00184">
    <property type="entry name" value="Thr_tRNA_synth"/>
    <property type="match status" value="1"/>
</dbReference>
<dbReference type="InterPro" id="IPR002314">
    <property type="entry name" value="aa-tRNA-synt_IIb"/>
</dbReference>
<dbReference type="InterPro" id="IPR006195">
    <property type="entry name" value="aa-tRNA-synth_II"/>
</dbReference>
<dbReference type="InterPro" id="IPR045864">
    <property type="entry name" value="aa-tRNA-synth_II/BPL/LPL"/>
</dbReference>
<dbReference type="InterPro" id="IPR004154">
    <property type="entry name" value="Anticodon-bd"/>
</dbReference>
<dbReference type="InterPro" id="IPR036621">
    <property type="entry name" value="Anticodon-bd_dom_sf"/>
</dbReference>
<dbReference type="InterPro" id="IPR004095">
    <property type="entry name" value="TGS"/>
</dbReference>
<dbReference type="InterPro" id="IPR002320">
    <property type="entry name" value="Thr-tRNA-ligase_IIa"/>
</dbReference>
<dbReference type="InterPro" id="IPR018163">
    <property type="entry name" value="Thr/Ala-tRNA-synth_IIc_edit"/>
</dbReference>
<dbReference type="InterPro" id="IPR047246">
    <property type="entry name" value="ThrRS_anticodon"/>
</dbReference>
<dbReference type="InterPro" id="IPR033728">
    <property type="entry name" value="ThrRS_core"/>
</dbReference>
<dbReference type="InterPro" id="IPR012947">
    <property type="entry name" value="tRNA_SAD"/>
</dbReference>
<dbReference type="NCBIfam" id="TIGR00418">
    <property type="entry name" value="thrS"/>
    <property type="match status" value="1"/>
</dbReference>
<dbReference type="PANTHER" id="PTHR11451:SF44">
    <property type="entry name" value="THREONINE--TRNA LIGASE, CHLOROPLASTIC_MITOCHONDRIAL 2"/>
    <property type="match status" value="1"/>
</dbReference>
<dbReference type="PANTHER" id="PTHR11451">
    <property type="entry name" value="THREONINE-TRNA LIGASE"/>
    <property type="match status" value="1"/>
</dbReference>
<dbReference type="Pfam" id="PF03129">
    <property type="entry name" value="HGTP_anticodon"/>
    <property type="match status" value="1"/>
</dbReference>
<dbReference type="Pfam" id="PF00587">
    <property type="entry name" value="tRNA-synt_2b"/>
    <property type="match status" value="1"/>
</dbReference>
<dbReference type="Pfam" id="PF07973">
    <property type="entry name" value="tRNA_SAD"/>
    <property type="match status" value="1"/>
</dbReference>
<dbReference type="PRINTS" id="PR01047">
    <property type="entry name" value="TRNASYNTHTHR"/>
</dbReference>
<dbReference type="SMART" id="SM00863">
    <property type="entry name" value="tRNA_SAD"/>
    <property type="match status" value="1"/>
</dbReference>
<dbReference type="SUPFAM" id="SSF52954">
    <property type="entry name" value="Class II aaRS ABD-related"/>
    <property type="match status" value="1"/>
</dbReference>
<dbReference type="SUPFAM" id="SSF55681">
    <property type="entry name" value="Class II aaRS and biotin synthetases"/>
    <property type="match status" value="1"/>
</dbReference>
<dbReference type="SUPFAM" id="SSF55186">
    <property type="entry name" value="ThrRS/AlaRS common domain"/>
    <property type="match status" value="1"/>
</dbReference>
<dbReference type="PROSITE" id="PS50862">
    <property type="entry name" value="AA_TRNA_LIGASE_II"/>
    <property type="match status" value="1"/>
</dbReference>
<dbReference type="PROSITE" id="PS51880">
    <property type="entry name" value="TGS"/>
    <property type="match status" value="1"/>
</dbReference>